<comment type="function">
    <text evidence="2 3">Non-functional protein probably interfering with the disassembling mechanism of the intact light-harvesting complex of photosystem II (LHCII) in the thylakoid membranes. Responsible for a stay-green phenotype.</text>
</comment>
<comment type="subcellular location">
    <subcellularLocation>
        <location evidence="3">Plastid</location>
        <location evidence="3">Chloroplast</location>
    </subcellularLocation>
</comment>
<comment type="developmental stage">
    <text evidence="2">Not induced during senescence.</text>
</comment>
<comment type="induction">
    <text evidence="3">Up-regulated during dark-induced senescence.</text>
</comment>
<comment type="miscellaneous">
    <text evidence="5">Corresponds to one of the seven genes studied by Gregor Mendel in 1866 (PubMed:17204643). The wild type line JI4 has a functional SGR protein (AC A7VLV1) lacking a two amino acids insertion. This protein is involved in the chlorophyll breakdown pathway (Ref.1 and PubMed:18301989).</text>
</comment>
<comment type="similarity">
    <text evidence="4">Belongs to the staygreen family.</text>
</comment>
<evidence type="ECO:0000255" key="1"/>
<evidence type="ECO:0000269" key="2">
    <source>
    </source>
</evidence>
<evidence type="ECO:0000269" key="3">
    <source ref="1"/>
</evidence>
<evidence type="ECO:0000305" key="4"/>
<evidence type="ECO:0000305" key="5">
    <source>
    </source>
</evidence>
<organism>
    <name type="scientific">Pisum sativum</name>
    <name type="common">Garden pea</name>
    <name type="synonym">Lathyrus oleraceus</name>
    <dbReference type="NCBI Taxonomy" id="3888"/>
    <lineage>
        <taxon>Eukaryota</taxon>
        <taxon>Viridiplantae</taxon>
        <taxon>Streptophyta</taxon>
        <taxon>Embryophyta</taxon>
        <taxon>Tracheophyta</taxon>
        <taxon>Spermatophyta</taxon>
        <taxon>Magnoliopsida</taxon>
        <taxon>eudicotyledons</taxon>
        <taxon>Gunneridae</taxon>
        <taxon>Pentapetalae</taxon>
        <taxon>rosids</taxon>
        <taxon>fabids</taxon>
        <taxon>Fabales</taxon>
        <taxon>Fabaceae</taxon>
        <taxon>Papilionoideae</taxon>
        <taxon>50 kb inversion clade</taxon>
        <taxon>NPAAA clade</taxon>
        <taxon>Hologalegina</taxon>
        <taxon>IRL clade</taxon>
        <taxon>Fabeae</taxon>
        <taxon>Pisum</taxon>
    </lineage>
</organism>
<reference key="1">
    <citation type="journal article" date="2007" name="Proc. Natl. Acad. Sci. U.S.A.">
        <title>Mendel's green cotyledon gene encodes a positive regulator of the chlorophyll-degrading pathway.</title>
        <authorList>
            <person name="Sato Y."/>
            <person name="Morita R."/>
            <person name="Nishimura M."/>
            <person name="Yamaguchi H."/>
            <person name="Kusaba M."/>
        </authorList>
    </citation>
    <scope>NUCLEOTIDE SEQUENCE [MRNA]</scope>
    <scope>FUNCTION</scope>
    <scope>INDUCTION BY DARK-INDUCED SENESCENCE</scope>
    <scope>SUBCELLULAR LOCATION</scope>
    <source>
        <strain>cv. JI 2775</strain>
    </source>
</reference>
<reference key="2">
    <citation type="journal article" date="2008" name="Plant Mol. Biol.">
        <title>Stay-green protein, defective in Mendel's green cotyledon mutant, acts independent and upstream of pheophorbide a oxygenase in the chlorophyll catabolic pathway.</title>
        <authorList>
            <person name="Aubry S."/>
            <person name="Mani J."/>
            <person name="Hortensteiner S."/>
        </authorList>
    </citation>
    <scope>NUCLEOTIDE SEQUENCE [GENOMIC DNA]</scope>
    <scope>FUNCTION</scope>
    <scope>DEVELOPMENTAL STAGE</scope>
    <source>
        <strain>cv. JI2775</strain>
    </source>
</reference>
<reference key="3">
    <citation type="journal article" date="2007" name="Science">
        <title>Cross-species identification of Mendel's I locus.</title>
        <authorList>
            <person name="Armstead I."/>
            <person name="Donnison I."/>
            <person name="Aubry S."/>
            <person name="Harper J."/>
            <person name="Hortensteiner S."/>
            <person name="James C."/>
            <person name="Mani J."/>
            <person name="Moffet M."/>
            <person name="Ougham H."/>
            <person name="Roberts L."/>
            <person name="Thomas A."/>
            <person name="Weeden N."/>
            <person name="Thomas H."/>
            <person name="King I."/>
        </authorList>
    </citation>
    <scope>IDENTIFICATION</scope>
</reference>
<name>SGRM_PEA</name>
<sequence>MDTLTSAPLLTSKFKPSFSPQQKPCFPHRRRFENGKKKQSIVPVARLFGPAIFEASKLKVLFLGIDENKHPGNLPRTYTLTHSDVTSKLTLAISQTINNSQLQGWYNRLQRDEVVAQWKKVKGKMSLHVHCHISGGHFLLDIFARLRYFIFCKELPVVLKAFVHGDGNLFNNYPELEESLVWVFFHSKILIREFNKVECWGPLKEASQPTSGTHSDLKLPQSCEEDCECCFPPLNLSPIPCSNEVINNTYEPIDGIGTQHGNL</sequence>
<keyword id="KW-0150">Chloroplast</keyword>
<keyword id="KW-0934">Plastid</keyword>
<keyword id="KW-0809">Transit peptide</keyword>
<feature type="transit peptide" description="Chloroplast" evidence="1">
    <location>
        <begin position="1"/>
        <end position="54"/>
    </location>
</feature>
<feature type="chain" id="PRO_0000425235" description="Non-functional protein STAY-GREEN, chloroplastic">
    <location>
        <begin position="55"/>
        <end position="263"/>
    </location>
</feature>
<gene>
    <name type="primary">SGR</name>
</gene>
<accession>A7VLV2</accession>
<proteinExistence type="evidence at transcript level"/>
<protein>
    <recommendedName>
        <fullName>Non-functional protein STAY-GREEN, chloroplastic</fullName>
    </recommendedName>
    <alternativeName>
        <fullName>Protein STAYGREEN</fullName>
    </alternativeName>
</protein>
<dbReference type="EMBL" id="AB303332">
    <property type="protein sequence ID" value="BAF76352.1"/>
    <property type="molecule type" value="mRNA"/>
</dbReference>
<dbReference type="EMBL" id="AM884278">
    <property type="protein sequence ID" value="CAP04955.2"/>
    <property type="molecule type" value="Genomic_DNA"/>
</dbReference>
<dbReference type="SMR" id="A7VLV2"/>
<dbReference type="GO" id="GO:0009507">
    <property type="term" value="C:chloroplast"/>
    <property type="evidence" value="ECO:0007669"/>
    <property type="project" value="UniProtKB-SubCell"/>
</dbReference>
<dbReference type="GO" id="GO:0015996">
    <property type="term" value="P:chlorophyll catabolic process"/>
    <property type="evidence" value="ECO:0007669"/>
    <property type="project" value="TreeGrafter"/>
</dbReference>
<dbReference type="InterPro" id="IPR024438">
    <property type="entry name" value="Staygreen"/>
</dbReference>
<dbReference type="PANTHER" id="PTHR31750:SF4">
    <property type="entry name" value="LP06106P"/>
    <property type="match status" value="1"/>
</dbReference>
<dbReference type="PANTHER" id="PTHR31750">
    <property type="entry name" value="PROTEIN STAY-GREEN 1, CHLOROPLASTIC-RELATED"/>
    <property type="match status" value="1"/>
</dbReference>
<dbReference type="Pfam" id="PF12638">
    <property type="entry name" value="Staygreen"/>
    <property type="match status" value="1"/>
</dbReference>